<name>HFQ_BACSU</name>
<dbReference type="EMBL" id="AL009126">
    <property type="protein sequence ID" value="CAB13618.1"/>
    <property type="molecule type" value="Genomic_DNA"/>
</dbReference>
<dbReference type="PIR" id="B69884">
    <property type="entry name" value="B69884"/>
</dbReference>
<dbReference type="RefSeq" id="NP_389616.1">
    <property type="nucleotide sequence ID" value="NC_000964.3"/>
</dbReference>
<dbReference type="RefSeq" id="WP_003221097.1">
    <property type="nucleotide sequence ID" value="NZ_OZ025638.1"/>
</dbReference>
<dbReference type="PDB" id="3AHU">
    <property type="method" value="X-ray"/>
    <property type="resolution" value="2.20 A"/>
    <property type="chains" value="A/B/C=1-73"/>
</dbReference>
<dbReference type="PDB" id="3HSB">
    <property type="method" value="X-ray"/>
    <property type="resolution" value="2.20 A"/>
    <property type="chains" value="A/B/C/D/E/F=1-73"/>
</dbReference>
<dbReference type="PDBsum" id="3AHU"/>
<dbReference type="PDBsum" id="3HSB"/>
<dbReference type="SMR" id="O31796"/>
<dbReference type="FunCoup" id="O31796">
    <property type="interactions" value="171"/>
</dbReference>
<dbReference type="STRING" id="224308.BSU17340"/>
<dbReference type="PaxDb" id="224308-BSU17340"/>
<dbReference type="EnsemblBacteria" id="CAB13618">
    <property type="protein sequence ID" value="CAB13618"/>
    <property type="gene ID" value="BSU_17340"/>
</dbReference>
<dbReference type="GeneID" id="86873752"/>
<dbReference type="GeneID" id="940073"/>
<dbReference type="KEGG" id="bsu:BSU17340"/>
<dbReference type="PATRIC" id="fig|224308.179.peg.1880"/>
<dbReference type="eggNOG" id="COG1923">
    <property type="taxonomic scope" value="Bacteria"/>
</dbReference>
<dbReference type="InParanoid" id="O31796"/>
<dbReference type="OrthoDB" id="9799751at2"/>
<dbReference type="PhylomeDB" id="O31796"/>
<dbReference type="BioCyc" id="BSUB:BSU17340-MONOMER"/>
<dbReference type="EvolutionaryTrace" id="O31796"/>
<dbReference type="PRO" id="PR:O31796"/>
<dbReference type="Proteomes" id="UP000001570">
    <property type="component" value="Chromosome"/>
</dbReference>
<dbReference type="GO" id="GO:0005829">
    <property type="term" value="C:cytosol"/>
    <property type="evidence" value="ECO:0000318"/>
    <property type="project" value="GO_Central"/>
</dbReference>
<dbReference type="GO" id="GO:0003723">
    <property type="term" value="F:RNA binding"/>
    <property type="evidence" value="ECO:0000318"/>
    <property type="project" value="GO_Central"/>
</dbReference>
<dbReference type="GO" id="GO:0006355">
    <property type="term" value="P:regulation of DNA-templated transcription"/>
    <property type="evidence" value="ECO:0007669"/>
    <property type="project" value="InterPro"/>
</dbReference>
<dbReference type="GO" id="GO:0043487">
    <property type="term" value="P:regulation of RNA stability"/>
    <property type="evidence" value="ECO:0000318"/>
    <property type="project" value="GO_Central"/>
</dbReference>
<dbReference type="GO" id="GO:0045974">
    <property type="term" value="P:regulation of translation, ncRNA-mediated"/>
    <property type="evidence" value="ECO:0000318"/>
    <property type="project" value="GO_Central"/>
</dbReference>
<dbReference type="CDD" id="cd01716">
    <property type="entry name" value="Hfq"/>
    <property type="match status" value="1"/>
</dbReference>
<dbReference type="FunFam" id="2.30.30.100:FF:000012">
    <property type="entry name" value="RNA-binding protein Hfq"/>
    <property type="match status" value="1"/>
</dbReference>
<dbReference type="Gene3D" id="2.30.30.100">
    <property type="match status" value="1"/>
</dbReference>
<dbReference type="HAMAP" id="MF_00436">
    <property type="entry name" value="Hfq"/>
    <property type="match status" value="1"/>
</dbReference>
<dbReference type="InterPro" id="IPR005001">
    <property type="entry name" value="Hfq"/>
</dbReference>
<dbReference type="InterPro" id="IPR010920">
    <property type="entry name" value="LSM_dom_sf"/>
</dbReference>
<dbReference type="InterPro" id="IPR047575">
    <property type="entry name" value="Sm"/>
</dbReference>
<dbReference type="NCBIfam" id="TIGR02383">
    <property type="entry name" value="Hfq"/>
    <property type="match status" value="1"/>
</dbReference>
<dbReference type="NCBIfam" id="NF001602">
    <property type="entry name" value="PRK00395.1"/>
    <property type="match status" value="1"/>
</dbReference>
<dbReference type="PANTHER" id="PTHR34772">
    <property type="entry name" value="RNA-BINDING PROTEIN HFQ"/>
    <property type="match status" value="1"/>
</dbReference>
<dbReference type="PANTHER" id="PTHR34772:SF1">
    <property type="entry name" value="RNA-BINDING PROTEIN HFQ"/>
    <property type="match status" value="1"/>
</dbReference>
<dbReference type="Pfam" id="PF17209">
    <property type="entry name" value="Hfq"/>
    <property type="match status" value="1"/>
</dbReference>
<dbReference type="SUPFAM" id="SSF50182">
    <property type="entry name" value="Sm-like ribonucleoproteins"/>
    <property type="match status" value="1"/>
</dbReference>
<dbReference type="PROSITE" id="PS52002">
    <property type="entry name" value="SM"/>
    <property type="match status" value="1"/>
</dbReference>
<accession>O31796</accession>
<evidence type="ECO:0000255" key="1">
    <source>
        <dbReference type="HAMAP-Rule" id="MF_00436"/>
    </source>
</evidence>
<evidence type="ECO:0000255" key="2">
    <source>
        <dbReference type="PROSITE-ProRule" id="PRU01346"/>
    </source>
</evidence>
<evidence type="ECO:0007829" key="3">
    <source>
        <dbReference type="PDB" id="3AHU"/>
    </source>
</evidence>
<gene>
    <name evidence="1" type="primary">hfq</name>
    <name type="synonym">ymaH</name>
    <name type="ordered locus">BSU17340</name>
</gene>
<comment type="function">
    <text evidence="1">RNA chaperone that binds small regulatory RNA (sRNAs) and mRNAs to facilitate mRNA translational regulation in response to envelope stress, environmental stress and changes in metabolite concentrations. Also binds with high specificity to tRNAs.</text>
</comment>
<comment type="subunit">
    <text evidence="1">Homohexamer.</text>
</comment>
<comment type="similarity">
    <text evidence="1">Belongs to the Hfq family.</text>
</comment>
<feature type="chain" id="PRO_0000095621" description="RNA-binding protein Hfq">
    <location>
        <begin position="1"/>
        <end position="73"/>
    </location>
</feature>
<feature type="domain" description="Sm" evidence="2">
    <location>
        <begin position="8"/>
        <end position="68"/>
    </location>
</feature>
<feature type="helix" evidence="3">
    <location>
        <begin position="6"/>
        <end position="17"/>
    </location>
</feature>
<feature type="strand" evidence="3">
    <location>
        <begin position="21"/>
        <end position="25"/>
    </location>
</feature>
<feature type="strand" evidence="3">
    <location>
        <begin position="30"/>
        <end position="38"/>
    </location>
</feature>
<feature type="strand" evidence="3">
    <location>
        <begin position="40"/>
        <end position="49"/>
    </location>
</feature>
<feature type="strand" evidence="3">
    <location>
        <begin position="51"/>
        <end position="55"/>
    </location>
</feature>
<feature type="helix" evidence="3">
    <location>
        <begin position="56"/>
        <end position="58"/>
    </location>
</feature>
<feature type="strand" evidence="3">
    <location>
        <begin position="59"/>
        <end position="66"/>
    </location>
</feature>
<proteinExistence type="evidence at protein level"/>
<protein>
    <recommendedName>
        <fullName evidence="1">RNA-binding protein Hfq</fullName>
    </recommendedName>
</protein>
<organism>
    <name type="scientific">Bacillus subtilis (strain 168)</name>
    <dbReference type="NCBI Taxonomy" id="224308"/>
    <lineage>
        <taxon>Bacteria</taxon>
        <taxon>Bacillati</taxon>
        <taxon>Bacillota</taxon>
        <taxon>Bacilli</taxon>
        <taxon>Bacillales</taxon>
        <taxon>Bacillaceae</taxon>
        <taxon>Bacillus</taxon>
    </lineage>
</organism>
<keyword id="KW-0002">3D-structure</keyword>
<keyword id="KW-1185">Reference proteome</keyword>
<keyword id="KW-0694">RNA-binding</keyword>
<keyword id="KW-0346">Stress response</keyword>
<sequence>MKPINIQDQFLNQIRKENTYVTVFLLNGFQLRGQVKGFDNFTVLLESEGKQQLIYKHAISTFAPQKNVQLELE</sequence>
<reference key="1">
    <citation type="journal article" date="1997" name="Nature">
        <title>The complete genome sequence of the Gram-positive bacterium Bacillus subtilis.</title>
        <authorList>
            <person name="Kunst F."/>
            <person name="Ogasawara N."/>
            <person name="Moszer I."/>
            <person name="Albertini A.M."/>
            <person name="Alloni G."/>
            <person name="Azevedo V."/>
            <person name="Bertero M.G."/>
            <person name="Bessieres P."/>
            <person name="Bolotin A."/>
            <person name="Borchert S."/>
            <person name="Borriss R."/>
            <person name="Boursier L."/>
            <person name="Brans A."/>
            <person name="Braun M."/>
            <person name="Brignell S.C."/>
            <person name="Bron S."/>
            <person name="Brouillet S."/>
            <person name="Bruschi C.V."/>
            <person name="Caldwell B."/>
            <person name="Capuano V."/>
            <person name="Carter N.M."/>
            <person name="Choi S.-K."/>
            <person name="Codani J.-J."/>
            <person name="Connerton I.F."/>
            <person name="Cummings N.J."/>
            <person name="Daniel R.A."/>
            <person name="Denizot F."/>
            <person name="Devine K.M."/>
            <person name="Duesterhoeft A."/>
            <person name="Ehrlich S.D."/>
            <person name="Emmerson P.T."/>
            <person name="Entian K.-D."/>
            <person name="Errington J."/>
            <person name="Fabret C."/>
            <person name="Ferrari E."/>
            <person name="Foulger D."/>
            <person name="Fritz C."/>
            <person name="Fujita M."/>
            <person name="Fujita Y."/>
            <person name="Fuma S."/>
            <person name="Galizzi A."/>
            <person name="Galleron N."/>
            <person name="Ghim S.-Y."/>
            <person name="Glaser P."/>
            <person name="Goffeau A."/>
            <person name="Golightly E.J."/>
            <person name="Grandi G."/>
            <person name="Guiseppi G."/>
            <person name="Guy B.J."/>
            <person name="Haga K."/>
            <person name="Haiech J."/>
            <person name="Harwood C.R."/>
            <person name="Henaut A."/>
            <person name="Hilbert H."/>
            <person name="Holsappel S."/>
            <person name="Hosono S."/>
            <person name="Hullo M.-F."/>
            <person name="Itaya M."/>
            <person name="Jones L.-M."/>
            <person name="Joris B."/>
            <person name="Karamata D."/>
            <person name="Kasahara Y."/>
            <person name="Klaerr-Blanchard M."/>
            <person name="Klein C."/>
            <person name="Kobayashi Y."/>
            <person name="Koetter P."/>
            <person name="Koningstein G."/>
            <person name="Krogh S."/>
            <person name="Kumano M."/>
            <person name="Kurita K."/>
            <person name="Lapidus A."/>
            <person name="Lardinois S."/>
            <person name="Lauber J."/>
            <person name="Lazarevic V."/>
            <person name="Lee S.-M."/>
            <person name="Levine A."/>
            <person name="Liu H."/>
            <person name="Masuda S."/>
            <person name="Mauel C."/>
            <person name="Medigue C."/>
            <person name="Medina N."/>
            <person name="Mellado R.P."/>
            <person name="Mizuno M."/>
            <person name="Moestl D."/>
            <person name="Nakai S."/>
            <person name="Noback M."/>
            <person name="Noone D."/>
            <person name="O'Reilly M."/>
            <person name="Ogawa K."/>
            <person name="Ogiwara A."/>
            <person name="Oudega B."/>
            <person name="Park S.-H."/>
            <person name="Parro V."/>
            <person name="Pohl T.M."/>
            <person name="Portetelle D."/>
            <person name="Porwollik S."/>
            <person name="Prescott A.M."/>
            <person name="Presecan E."/>
            <person name="Pujic P."/>
            <person name="Purnelle B."/>
            <person name="Rapoport G."/>
            <person name="Rey M."/>
            <person name="Reynolds S."/>
            <person name="Rieger M."/>
            <person name="Rivolta C."/>
            <person name="Rocha E."/>
            <person name="Roche B."/>
            <person name="Rose M."/>
            <person name="Sadaie Y."/>
            <person name="Sato T."/>
            <person name="Scanlan E."/>
            <person name="Schleich S."/>
            <person name="Schroeter R."/>
            <person name="Scoffone F."/>
            <person name="Sekiguchi J."/>
            <person name="Sekowska A."/>
            <person name="Seror S.J."/>
            <person name="Serror P."/>
            <person name="Shin B.-S."/>
            <person name="Soldo B."/>
            <person name="Sorokin A."/>
            <person name="Tacconi E."/>
            <person name="Takagi T."/>
            <person name="Takahashi H."/>
            <person name="Takemaru K."/>
            <person name="Takeuchi M."/>
            <person name="Tamakoshi A."/>
            <person name="Tanaka T."/>
            <person name="Terpstra P."/>
            <person name="Tognoni A."/>
            <person name="Tosato V."/>
            <person name="Uchiyama S."/>
            <person name="Vandenbol M."/>
            <person name="Vannier F."/>
            <person name="Vassarotti A."/>
            <person name="Viari A."/>
            <person name="Wambutt R."/>
            <person name="Wedler E."/>
            <person name="Wedler H."/>
            <person name="Weitzenegger T."/>
            <person name="Winters P."/>
            <person name="Wipat A."/>
            <person name="Yamamoto H."/>
            <person name="Yamane K."/>
            <person name="Yasumoto K."/>
            <person name="Yata K."/>
            <person name="Yoshida K."/>
            <person name="Yoshikawa H.-F."/>
            <person name="Zumstein E."/>
            <person name="Yoshikawa H."/>
            <person name="Danchin A."/>
        </authorList>
    </citation>
    <scope>NUCLEOTIDE SEQUENCE [LARGE SCALE GENOMIC DNA]</scope>
    <source>
        <strain>168</strain>
    </source>
</reference>